<name>PAN2_RAT</name>
<reference key="1">
    <citation type="journal article" date="2004" name="Nature">
        <title>Genome sequence of the Brown Norway rat yields insights into mammalian evolution.</title>
        <authorList>
            <person name="Gibbs R.A."/>
            <person name="Weinstock G.M."/>
            <person name="Metzker M.L."/>
            <person name="Muzny D.M."/>
            <person name="Sodergren E.J."/>
            <person name="Scherer S."/>
            <person name="Scott G."/>
            <person name="Steffen D."/>
            <person name="Worley K.C."/>
            <person name="Burch P.E."/>
            <person name="Okwuonu G."/>
            <person name="Hines S."/>
            <person name="Lewis L."/>
            <person name="Deramo C."/>
            <person name="Delgado O."/>
            <person name="Dugan-Rocha S."/>
            <person name="Miner G."/>
            <person name="Morgan M."/>
            <person name="Hawes A."/>
            <person name="Gill R."/>
            <person name="Holt R.A."/>
            <person name="Adams M.D."/>
            <person name="Amanatides P.G."/>
            <person name="Baden-Tillson H."/>
            <person name="Barnstead M."/>
            <person name="Chin S."/>
            <person name="Evans C.A."/>
            <person name="Ferriera S."/>
            <person name="Fosler C."/>
            <person name="Glodek A."/>
            <person name="Gu Z."/>
            <person name="Jennings D."/>
            <person name="Kraft C.L."/>
            <person name="Nguyen T."/>
            <person name="Pfannkoch C.M."/>
            <person name="Sitter C."/>
            <person name="Sutton G.G."/>
            <person name="Venter J.C."/>
            <person name="Woodage T."/>
            <person name="Smith D."/>
            <person name="Lee H.-M."/>
            <person name="Gustafson E."/>
            <person name="Cahill P."/>
            <person name="Kana A."/>
            <person name="Doucette-Stamm L."/>
            <person name="Weinstock K."/>
            <person name="Fechtel K."/>
            <person name="Weiss R.B."/>
            <person name="Dunn D.M."/>
            <person name="Green E.D."/>
            <person name="Blakesley R.W."/>
            <person name="Bouffard G.G."/>
            <person name="De Jong P.J."/>
            <person name="Osoegawa K."/>
            <person name="Zhu B."/>
            <person name="Marra M."/>
            <person name="Schein J."/>
            <person name="Bosdet I."/>
            <person name="Fjell C."/>
            <person name="Jones S."/>
            <person name="Krzywinski M."/>
            <person name="Mathewson C."/>
            <person name="Siddiqui A."/>
            <person name="Wye N."/>
            <person name="McPherson J."/>
            <person name="Zhao S."/>
            <person name="Fraser C.M."/>
            <person name="Shetty J."/>
            <person name="Shatsman S."/>
            <person name="Geer K."/>
            <person name="Chen Y."/>
            <person name="Abramzon S."/>
            <person name="Nierman W.C."/>
            <person name="Havlak P.H."/>
            <person name="Chen R."/>
            <person name="Durbin K.J."/>
            <person name="Egan A."/>
            <person name="Ren Y."/>
            <person name="Song X.-Z."/>
            <person name="Li B."/>
            <person name="Liu Y."/>
            <person name="Qin X."/>
            <person name="Cawley S."/>
            <person name="Cooney A.J."/>
            <person name="D'Souza L.M."/>
            <person name="Martin K."/>
            <person name="Wu J.Q."/>
            <person name="Gonzalez-Garay M.L."/>
            <person name="Jackson A.R."/>
            <person name="Kalafus K.J."/>
            <person name="McLeod M.P."/>
            <person name="Milosavljevic A."/>
            <person name="Virk D."/>
            <person name="Volkov A."/>
            <person name="Wheeler D.A."/>
            <person name="Zhang Z."/>
            <person name="Bailey J.A."/>
            <person name="Eichler E.E."/>
            <person name="Tuzun E."/>
            <person name="Birney E."/>
            <person name="Mongin E."/>
            <person name="Ureta-Vidal A."/>
            <person name="Woodwark C."/>
            <person name="Zdobnov E."/>
            <person name="Bork P."/>
            <person name="Suyama M."/>
            <person name="Torrents D."/>
            <person name="Alexandersson M."/>
            <person name="Trask B.J."/>
            <person name="Young J.M."/>
            <person name="Huang H."/>
            <person name="Wang H."/>
            <person name="Xing H."/>
            <person name="Daniels S."/>
            <person name="Gietzen D."/>
            <person name="Schmidt J."/>
            <person name="Stevens K."/>
            <person name="Vitt U."/>
            <person name="Wingrove J."/>
            <person name="Camara F."/>
            <person name="Mar Alba M."/>
            <person name="Abril J.F."/>
            <person name="Guigo R."/>
            <person name="Smit A."/>
            <person name="Dubchak I."/>
            <person name="Rubin E.M."/>
            <person name="Couronne O."/>
            <person name="Poliakov A."/>
            <person name="Huebner N."/>
            <person name="Ganten D."/>
            <person name="Goesele C."/>
            <person name="Hummel O."/>
            <person name="Kreitler T."/>
            <person name="Lee Y.-A."/>
            <person name="Monti J."/>
            <person name="Schulz H."/>
            <person name="Zimdahl H."/>
            <person name="Himmelbauer H."/>
            <person name="Lehrach H."/>
            <person name="Jacob H.J."/>
            <person name="Bromberg S."/>
            <person name="Gullings-Handley J."/>
            <person name="Jensen-Seaman M.I."/>
            <person name="Kwitek A.E."/>
            <person name="Lazar J."/>
            <person name="Pasko D."/>
            <person name="Tonellato P.J."/>
            <person name="Twigger S."/>
            <person name="Ponting C.P."/>
            <person name="Duarte J.M."/>
            <person name="Rice S."/>
            <person name="Goodstadt L."/>
            <person name="Beatson S.A."/>
            <person name="Emes R.D."/>
            <person name="Winter E.E."/>
            <person name="Webber C."/>
            <person name="Brandt P."/>
            <person name="Nyakatura G."/>
            <person name="Adetobi M."/>
            <person name="Chiaromonte F."/>
            <person name="Elnitski L."/>
            <person name="Eswara P."/>
            <person name="Hardison R.C."/>
            <person name="Hou M."/>
            <person name="Kolbe D."/>
            <person name="Makova K."/>
            <person name="Miller W."/>
            <person name="Nekrutenko A."/>
            <person name="Riemer C."/>
            <person name="Schwartz S."/>
            <person name="Taylor J."/>
            <person name="Yang S."/>
            <person name="Zhang Y."/>
            <person name="Lindpaintner K."/>
            <person name="Andrews T.D."/>
            <person name="Caccamo M."/>
            <person name="Clamp M."/>
            <person name="Clarke L."/>
            <person name="Curwen V."/>
            <person name="Durbin R.M."/>
            <person name="Eyras E."/>
            <person name="Searle S.M."/>
            <person name="Cooper G.M."/>
            <person name="Batzoglou S."/>
            <person name="Brudno M."/>
            <person name="Sidow A."/>
            <person name="Stone E.A."/>
            <person name="Payseur B.A."/>
            <person name="Bourque G."/>
            <person name="Lopez-Otin C."/>
            <person name="Puente X.S."/>
            <person name="Chakrabarti K."/>
            <person name="Chatterji S."/>
            <person name="Dewey C."/>
            <person name="Pachter L."/>
            <person name="Bray N."/>
            <person name="Yap V.B."/>
            <person name="Caspi A."/>
            <person name="Tesler G."/>
            <person name="Pevzner P.A."/>
            <person name="Haussler D."/>
            <person name="Roskin K.M."/>
            <person name="Baertsch R."/>
            <person name="Clawson H."/>
            <person name="Furey T.S."/>
            <person name="Hinrichs A.S."/>
            <person name="Karolchik D."/>
            <person name="Kent W.J."/>
            <person name="Rosenbloom K.R."/>
            <person name="Trumbower H."/>
            <person name="Weirauch M."/>
            <person name="Cooper D.N."/>
            <person name="Stenson P.D."/>
            <person name="Ma B."/>
            <person name="Brent M."/>
            <person name="Arumugam M."/>
            <person name="Shteynberg D."/>
            <person name="Copley R.R."/>
            <person name="Taylor M.S."/>
            <person name="Riethman H."/>
            <person name="Mudunuri U."/>
            <person name="Peterson J."/>
            <person name="Guyer M."/>
            <person name="Felsenfeld A."/>
            <person name="Old S."/>
            <person name="Mockrin S."/>
            <person name="Collins F.S."/>
        </authorList>
    </citation>
    <scope>NUCLEOTIDE SEQUENCE [LARGE SCALE GENOMIC DNA]</scope>
    <source>
        <strain>Brown Norway</strain>
    </source>
</reference>
<reference key="2">
    <citation type="journal article" date="2004" name="Genome Res.">
        <title>A genomic analysis of rat proteases and protease inhibitors.</title>
        <authorList>
            <person name="Puente X.S."/>
            <person name="Lopez-Otin C."/>
        </authorList>
    </citation>
    <scope>IDENTIFICATION</scope>
</reference>
<protein>
    <recommendedName>
        <fullName evidence="2">PAN2-PAN3 deadenylation complex catalytic subunit Pan2</fullName>
        <ecNumber evidence="2">3.1.13.4</ecNumber>
    </recommendedName>
    <alternativeName>
        <fullName evidence="2">Inactive ubiquitin carboxyl-terminal hydrolase 52</fullName>
    </alternativeName>
    <alternativeName>
        <fullName evidence="2">PAB1P-dependent poly(A)-specific ribonuclease</fullName>
    </alternativeName>
    <alternativeName>
        <fullName evidence="2">Poly(A)-nuclease deadenylation complex subunit 2</fullName>
        <shortName evidence="2">PAN deadenylation complex subunit 2</shortName>
    </alternativeName>
</protein>
<dbReference type="EC" id="3.1.13.4" evidence="2"/>
<dbReference type="EMBL" id="AABR03055877">
    <property type="status" value="NOT_ANNOTATED_CDS"/>
    <property type="molecule type" value="Genomic_DNA"/>
</dbReference>
<dbReference type="EMBL" id="BN000323">
    <property type="protein sequence ID" value="CAE48378.1"/>
    <property type="molecule type" value="mRNA"/>
</dbReference>
<dbReference type="RefSeq" id="NP_001008862.1">
    <property type="nucleotide sequence ID" value="NM_001008862.1"/>
</dbReference>
<dbReference type="SMR" id="Q6IE70"/>
<dbReference type="FunCoup" id="Q6IE70">
    <property type="interactions" value="3109"/>
</dbReference>
<dbReference type="STRING" id="10116.ENSRNOP00000039314"/>
<dbReference type="GlyGen" id="Q6IE70">
    <property type="glycosylation" value="1 site"/>
</dbReference>
<dbReference type="iPTMnet" id="Q6IE70"/>
<dbReference type="PhosphoSitePlus" id="Q6IE70"/>
<dbReference type="PaxDb" id="10116-ENSRNOP00000039314"/>
<dbReference type="UCSC" id="RGD:1303301">
    <property type="organism name" value="rat"/>
</dbReference>
<dbReference type="AGR" id="RGD:1303301"/>
<dbReference type="RGD" id="1303301">
    <property type="gene designation" value="Pan2"/>
</dbReference>
<dbReference type="eggNOG" id="KOG1275">
    <property type="taxonomic scope" value="Eukaryota"/>
</dbReference>
<dbReference type="InParanoid" id="Q6IE70"/>
<dbReference type="PhylomeDB" id="Q6IE70"/>
<dbReference type="TreeFam" id="TF105657"/>
<dbReference type="Reactome" id="R-RNO-429947">
    <property type="pathway name" value="Deadenylation of mRNA"/>
</dbReference>
<dbReference type="PRO" id="PR:Q6IE70"/>
<dbReference type="Proteomes" id="UP000002494">
    <property type="component" value="Unplaced"/>
</dbReference>
<dbReference type="GO" id="GO:0005634">
    <property type="term" value="C:nucleus"/>
    <property type="evidence" value="ECO:0007669"/>
    <property type="project" value="UniProtKB-SubCell"/>
</dbReference>
<dbReference type="GO" id="GO:0000932">
    <property type="term" value="C:P-body"/>
    <property type="evidence" value="ECO:0000266"/>
    <property type="project" value="RGD"/>
</dbReference>
<dbReference type="GO" id="GO:0031251">
    <property type="term" value="C:PAN complex"/>
    <property type="evidence" value="ECO:0000250"/>
    <property type="project" value="UniProtKB"/>
</dbReference>
<dbReference type="GO" id="GO:0000175">
    <property type="term" value="F:3'-5'-RNA exonuclease activity"/>
    <property type="evidence" value="ECO:0000250"/>
    <property type="project" value="UniProtKB"/>
</dbReference>
<dbReference type="GO" id="GO:0046872">
    <property type="term" value="F:metal ion binding"/>
    <property type="evidence" value="ECO:0007669"/>
    <property type="project" value="UniProtKB-KW"/>
</dbReference>
<dbReference type="GO" id="GO:0003676">
    <property type="term" value="F:nucleic acid binding"/>
    <property type="evidence" value="ECO:0007669"/>
    <property type="project" value="InterPro"/>
</dbReference>
<dbReference type="GO" id="GO:0004535">
    <property type="term" value="F:poly(A)-specific ribonuclease activity"/>
    <property type="evidence" value="ECO:0000250"/>
    <property type="project" value="UniProtKB"/>
</dbReference>
<dbReference type="GO" id="GO:0006397">
    <property type="term" value="P:mRNA processing"/>
    <property type="evidence" value="ECO:0007669"/>
    <property type="project" value="UniProtKB-KW"/>
</dbReference>
<dbReference type="GO" id="GO:0000289">
    <property type="term" value="P:nuclear-transcribed mRNA poly(A) tail shortening"/>
    <property type="evidence" value="ECO:0000318"/>
    <property type="project" value="GO_Central"/>
</dbReference>
<dbReference type="GO" id="GO:0010606">
    <property type="term" value="P:positive regulation of cytoplasmic mRNA processing body assembly"/>
    <property type="evidence" value="ECO:0007669"/>
    <property type="project" value="UniProtKB-UniRule"/>
</dbReference>
<dbReference type="CDD" id="cd06143">
    <property type="entry name" value="PAN2_exo"/>
    <property type="match status" value="1"/>
</dbReference>
<dbReference type="CDD" id="cd02672">
    <property type="entry name" value="Peptidase_C19P"/>
    <property type="match status" value="1"/>
</dbReference>
<dbReference type="FunFam" id="2.130.10.10:FF:000059">
    <property type="entry name" value="PAN2-PAN3 deadenylation complex catalytic subunit PAN2"/>
    <property type="match status" value="1"/>
</dbReference>
<dbReference type="FunFam" id="3.30.420.10:FF:000011">
    <property type="entry name" value="PAN2-PAN3 deadenylation complex catalytic subunit PAN2"/>
    <property type="match status" value="1"/>
</dbReference>
<dbReference type="FunFam" id="3.90.70.10:FF:000017">
    <property type="entry name" value="PAN2-PAN3 deadenylation complex catalytic subunit PAN2"/>
    <property type="match status" value="1"/>
</dbReference>
<dbReference type="Gene3D" id="3.90.70.10">
    <property type="entry name" value="Cysteine proteinases"/>
    <property type="match status" value="1"/>
</dbReference>
<dbReference type="Gene3D" id="3.30.420.10">
    <property type="entry name" value="Ribonuclease H-like superfamily/Ribonuclease H"/>
    <property type="match status" value="1"/>
</dbReference>
<dbReference type="Gene3D" id="2.130.10.10">
    <property type="entry name" value="YVTN repeat-like/Quinoprotein amine dehydrogenase"/>
    <property type="match status" value="1"/>
</dbReference>
<dbReference type="HAMAP" id="MF_03182">
    <property type="entry name" value="PAN2"/>
    <property type="match status" value="1"/>
</dbReference>
<dbReference type="InterPro" id="IPR013520">
    <property type="entry name" value="Exonuclease_RNaseT/DNA_pol3"/>
</dbReference>
<dbReference type="InterPro" id="IPR030843">
    <property type="entry name" value="PAN2"/>
</dbReference>
<dbReference type="InterPro" id="IPR050785">
    <property type="entry name" value="PAN2-PAN3_catalytic_subunit"/>
</dbReference>
<dbReference type="InterPro" id="IPR048841">
    <property type="entry name" value="PAN2_N"/>
</dbReference>
<dbReference type="InterPro" id="IPR028881">
    <property type="entry name" value="PAN2_UCH_dom"/>
</dbReference>
<dbReference type="InterPro" id="IPR038765">
    <property type="entry name" value="Papain-like_cys_pep_sf"/>
</dbReference>
<dbReference type="InterPro" id="IPR012337">
    <property type="entry name" value="RNaseH-like_sf"/>
</dbReference>
<dbReference type="InterPro" id="IPR036397">
    <property type="entry name" value="RNaseH_sf"/>
</dbReference>
<dbReference type="InterPro" id="IPR028889">
    <property type="entry name" value="USP_dom"/>
</dbReference>
<dbReference type="InterPro" id="IPR015943">
    <property type="entry name" value="WD40/YVTN_repeat-like_dom_sf"/>
</dbReference>
<dbReference type="InterPro" id="IPR036322">
    <property type="entry name" value="WD40_repeat_dom_sf"/>
</dbReference>
<dbReference type="PANTHER" id="PTHR15728">
    <property type="entry name" value="DEADENYLATION COMPLEX CATALYTIC SUBUNIT PAN2"/>
    <property type="match status" value="1"/>
</dbReference>
<dbReference type="PANTHER" id="PTHR15728:SF0">
    <property type="entry name" value="PAN2-PAN3 DEADENYLATION COMPLEX CATALYTIC SUBUNIT PAN2"/>
    <property type="match status" value="1"/>
</dbReference>
<dbReference type="Pfam" id="PF20770">
    <property type="entry name" value="PAN2_N"/>
    <property type="match status" value="1"/>
</dbReference>
<dbReference type="Pfam" id="PF00929">
    <property type="entry name" value="RNase_T"/>
    <property type="match status" value="1"/>
</dbReference>
<dbReference type="Pfam" id="PF13423">
    <property type="entry name" value="UCH_1"/>
    <property type="match status" value="1"/>
</dbReference>
<dbReference type="SMART" id="SM00479">
    <property type="entry name" value="EXOIII"/>
    <property type="match status" value="1"/>
</dbReference>
<dbReference type="SUPFAM" id="SSF54001">
    <property type="entry name" value="Cysteine proteinases"/>
    <property type="match status" value="1"/>
</dbReference>
<dbReference type="SUPFAM" id="SSF53098">
    <property type="entry name" value="Ribonuclease H-like"/>
    <property type="match status" value="1"/>
</dbReference>
<dbReference type="SUPFAM" id="SSF50978">
    <property type="entry name" value="WD40 repeat-like"/>
    <property type="match status" value="1"/>
</dbReference>
<dbReference type="PROSITE" id="PS50235">
    <property type="entry name" value="USP_3"/>
    <property type="match status" value="1"/>
</dbReference>
<accession>Q6IE70</accession>
<feature type="chain" id="PRO_0000280523" description="PAN2-PAN3 deadenylation complex catalytic subunit Pan2">
    <location>
        <begin position="1"/>
        <end position="1205"/>
    </location>
</feature>
<feature type="repeat" description="WD 1" evidence="2">
    <location>
        <begin position="153"/>
        <end position="193"/>
    </location>
</feature>
<feature type="repeat" description="WD 2" evidence="2">
    <location>
        <begin position="195"/>
        <end position="231"/>
    </location>
</feature>
<feature type="repeat" description="WD 3" evidence="2">
    <location>
        <begin position="244"/>
        <end position="280"/>
    </location>
</feature>
<feature type="repeat" description="WD 4" evidence="2">
    <location>
        <begin position="328"/>
        <end position="367"/>
    </location>
</feature>
<feature type="domain" description="USP" evidence="2">
    <location>
        <begin position="485"/>
        <end position="924"/>
    </location>
</feature>
<feature type="domain" description="Exonuclease" evidence="2">
    <location>
        <begin position="975"/>
        <end position="1147"/>
    </location>
</feature>
<feature type="region of interest" description="Linker" evidence="2">
    <location>
        <begin position="368"/>
        <end position="484"/>
    </location>
</feature>
<feature type="region of interest" description="Disordered" evidence="3">
    <location>
        <begin position="1179"/>
        <end position="1205"/>
    </location>
</feature>
<feature type="compositionally biased region" description="Low complexity" evidence="3">
    <location>
        <begin position="1184"/>
        <end position="1193"/>
    </location>
</feature>
<feature type="binding site" evidence="2">
    <location>
        <position position="978"/>
    </location>
    <ligand>
        <name>a divalent metal cation</name>
        <dbReference type="ChEBI" id="CHEBI:60240"/>
        <note>catalytic</note>
    </ligand>
</feature>
<feature type="binding site" evidence="2">
    <location>
        <position position="980"/>
    </location>
    <ligand>
        <name>a divalent metal cation</name>
        <dbReference type="ChEBI" id="CHEBI:60240"/>
        <note>catalytic</note>
    </ligand>
</feature>
<feature type="binding site" evidence="2">
    <location>
        <position position="1087"/>
    </location>
    <ligand>
        <name>a divalent metal cation</name>
        <dbReference type="ChEBI" id="CHEBI:60240"/>
        <note>catalytic</note>
    </ligand>
</feature>
<feature type="binding site" evidence="2">
    <location>
        <position position="1139"/>
    </location>
    <ligand>
        <name>a divalent metal cation</name>
        <dbReference type="ChEBI" id="CHEBI:60240"/>
        <note>catalytic</note>
    </ligand>
</feature>
<feature type="modified residue" description="Phosphoserine" evidence="1">
    <location>
        <position position="784"/>
    </location>
</feature>
<feature type="modified residue" description="Phosphoserine" evidence="1">
    <location>
        <position position="1189"/>
    </location>
</feature>
<keyword id="KW-0963">Cytoplasm</keyword>
<keyword id="KW-0269">Exonuclease</keyword>
<keyword id="KW-0378">Hydrolase</keyword>
<keyword id="KW-0479">Metal-binding</keyword>
<keyword id="KW-0507">mRNA processing</keyword>
<keyword id="KW-0540">Nuclease</keyword>
<keyword id="KW-0539">Nucleus</keyword>
<keyword id="KW-0597">Phosphoprotein</keyword>
<keyword id="KW-1185">Reference proteome</keyword>
<keyword id="KW-0677">Repeat</keyword>
<keyword id="KW-0853">WD repeat</keyword>
<evidence type="ECO:0000250" key="1">
    <source>
        <dbReference type="UniProtKB" id="Q504Q3"/>
    </source>
</evidence>
<evidence type="ECO:0000255" key="2">
    <source>
        <dbReference type="HAMAP-Rule" id="MF_03182"/>
    </source>
</evidence>
<evidence type="ECO:0000256" key="3">
    <source>
        <dbReference type="SAM" id="MobiDB-lite"/>
    </source>
</evidence>
<proteinExistence type="evidence at transcript level"/>
<sequence length="1205" mass="135627">MNFEGLDPGLAEFSPAMHSTLDPVLDAHLNPSLLQNVELDPEGVALEALPVQESVHIMEGVYSELHSVVAEVGVPVSVSHFDLQEEMLWVGSHGGHATSFFGPALERYSSFQVNGSDDIRQIQSLENGILFLTKNNLKYMARGGLIIFDYLLDESEDMHSLLLADNNTLLVGGLQNHVLEIDLNTVQETQKYAVETPGVTIMRQTNRFFFCGHTSGKVSLRDLRSFKVEHEFDAFSGSLSDFDVHGNLLAACGFSSRLTGLACDRFLKVYDLRMMRAITPLQVHVDPAFLRFIPTYTSRLAIISQSGQCQFCEPTGLANPADIFHVNPVGPLLMTFDVSASKQALAFGDSEGCVHLWTDSPEPSFNPYSRETEFALPCLVDSLPALDWSQDLLPLSLIPVPLTTDALLSDWPAANSAPAPRRAPPVDAEILRTMKKVGFIGYAPNPRTRLRNQIPYRLKESDHEFDNFSQVTESPTGREEEPLHTVSKKYRKVTIKYSKLGLEDFDFKHYNKTLFAGLEPHIPNAYCNCMIQVLYFLEPVRCLIQNHLCQKEFCLACELGFLFHMLDLSRGDPCQGSNFLRAFRTIPEASALGLILADSDEASGKGSLARLIQRWNRFILTQLHQDMQELEVPQAYRGAGGSFCSSGDSIIGQLFSCEMENCSLCRCGSETVRASSTLLFTLSYPEDKTGKNYDFAQVLKRSICLEQNTQAWCDSCEKYQPTIQTRNIRHLPDILVINCEVNSSKEADFWRLQAEVAFKIAVKKFGGEVKSKEFALADRKELRSPEGFLCCSSMEELKNVWLPFSIRMKMTKNKGLDVCNWADEHELSSLGTPSQWGPARAEEEHGVYVYDLMATVVHILDSRTGGSLVAHIKVGETYHQRKEGVTHQQWYLFNDFLIEPIDKYEAVQFDMNWKVPAILYYVKRNLNSRYNLNSKNPIEASVLLAEASLARKQRKTHTTFIPLMLNEMPQVGDLVGLDAEFVTLNEEEAELRSDGTKSTIKPSQMSVARITCVRGQGPNEGIPFIDDYISTQEQVVDYLTQYSGIKPGDLDAKISSKHLTTLKSTYLKLRFLIDIGVKFVGHGLQKDFRVINLMVPKDQVLDTVYLFHMPRKRMISLRFLAWYFLDLKIQGETHDSIEDARTALQLYRKYLELSKNGAEPESFHKVLKGLYEKGRKMDWKVPEPESQSSPKSKAGLRPGALGWVG</sequence>
<organism>
    <name type="scientific">Rattus norvegicus</name>
    <name type="common">Rat</name>
    <dbReference type="NCBI Taxonomy" id="10116"/>
    <lineage>
        <taxon>Eukaryota</taxon>
        <taxon>Metazoa</taxon>
        <taxon>Chordata</taxon>
        <taxon>Craniata</taxon>
        <taxon>Vertebrata</taxon>
        <taxon>Euteleostomi</taxon>
        <taxon>Mammalia</taxon>
        <taxon>Eutheria</taxon>
        <taxon>Euarchontoglires</taxon>
        <taxon>Glires</taxon>
        <taxon>Rodentia</taxon>
        <taxon>Myomorpha</taxon>
        <taxon>Muroidea</taxon>
        <taxon>Muridae</taxon>
        <taxon>Murinae</taxon>
        <taxon>Rattus</taxon>
    </lineage>
</organism>
<gene>
    <name evidence="2" type="primary">Pan2</name>
    <name type="synonym">Usp52</name>
</gene>
<comment type="function">
    <text evidence="2">Catalytic subunit of the poly(A)-nuclease (PAN) deadenylation complex, one of two cytoplasmic mRNA deadenylases involved in general and miRNA-mediated mRNA turnover. PAN specifically shortens poly(A) tails of RNA and the activity is stimulated by poly(A)-binding protein (PABP). PAN deadenylation is followed by rapid degradation of the shortened mRNA tails by the CCR4-NOT complex. Deadenylated mRNAs are then degraded by two alternative mechanisms, namely exosome-mediated 3'-5' exonucleolytic degradation, or deadenylation-dependent mRNA decaping and subsequent 5'-3' exonucleolytic degradation by XRN1. Also acts as an important regulator of the HIF1A-mediated hypoxic response. Required for HIF1A mRNA stability independent of poly(A) tail length regulation.</text>
</comment>
<comment type="catalytic activity">
    <reaction evidence="2">
        <text>Exonucleolytic cleavage of poly(A) to 5'-AMP.</text>
        <dbReference type="EC" id="3.1.13.4"/>
    </reaction>
</comment>
<comment type="cofactor">
    <cofactor evidence="2">
        <name>a divalent metal cation</name>
        <dbReference type="ChEBI" id="CHEBI:60240"/>
    </cofactor>
    <text evidence="2">Binds 2 metal cations per subunit in the catalytic exonuclease domain.</text>
</comment>
<comment type="activity regulation">
    <text evidence="2">Positively regulated by the regulatory subunit PAN3.</text>
</comment>
<comment type="subunit">
    <text evidence="1 2">Forms a heterotrimer with an asymmetric homodimer of the regulatory subunit PAN3 to form the poly(A)-nuclease (PAN) deadenylation complex (By similarity). Interacts with PAN3 isoform 1/Pan3L and isoform 3/Pan3S (By similarity). Interacts with ZFP36 (By similarity).</text>
</comment>
<comment type="subcellular location">
    <subcellularLocation>
        <location evidence="2">Cytoplasm</location>
        <location evidence="2">P-body</location>
    </subcellularLocation>
    <subcellularLocation>
        <location evidence="2">Nucleus</location>
    </subcellularLocation>
    <text evidence="2">Shuttles between nucleus and cytoplasm.</text>
</comment>
<comment type="domain">
    <text evidence="2">Contains a pseudo-UCH domain. This ubiquitin C-terminal hydrolase (UCH)-like or ubiquitin specific protease (USP)-like domain is predicted to be catalytically inactive because it lacks the active site catalytic triad characteristic of thiol proteases, with residues at the equivalent structural positions that are incompatible with catalysis, and it cannot bind ubiquitin. It functions as a structural scaffold for intra- and intermolecular interactions in the complex.</text>
</comment>
<comment type="domain">
    <text evidence="2">The linker, or PAN3 interaction domain (PID), between the WD40 repeats and the pseudo-UCH domain mediates interaction with PAN3.</text>
</comment>
<comment type="similarity">
    <text evidence="2">Belongs to the peptidase C19 family. PAN2 subfamily.</text>
</comment>